<proteinExistence type="evidence at transcript level"/>
<keyword id="KW-0256">Endoplasmic reticulum</keyword>
<keyword id="KW-0444">Lipid biosynthesis</keyword>
<keyword id="KW-0443">Lipid metabolism</keyword>
<keyword id="KW-0472">Membrane</keyword>
<keyword id="KW-0521">NADP</keyword>
<keyword id="KW-0560">Oxidoreductase</keyword>
<keyword id="KW-1185">Reference proteome</keyword>
<keyword id="KW-0752">Steroid biosynthesis</keyword>
<keyword id="KW-0812">Transmembrane</keyword>
<keyword id="KW-1133">Transmembrane helix</keyword>
<dbReference type="EC" id="1.1.1.330" evidence="2"/>
<dbReference type="EC" id="1.1.1.62" evidence="2"/>
<dbReference type="EMBL" id="BC084629">
    <property type="protein sequence ID" value="AAH84629.1"/>
    <property type="molecule type" value="mRNA"/>
</dbReference>
<dbReference type="RefSeq" id="NP_001088370.1">
    <property type="nucleotide sequence ID" value="NM_001094901.1"/>
</dbReference>
<dbReference type="SMR" id="Q5XG41"/>
<dbReference type="DNASU" id="495218"/>
<dbReference type="GeneID" id="495218"/>
<dbReference type="KEGG" id="xla:495218"/>
<dbReference type="AGR" id="Xenbase:XB-GENE-6254121"/>
<dbReference type="CTD" id="495218"/>
<dbReference type="Xenbase" id="XB-GENE-6254121">
    <property type="gene designation" value="hsd17b12.L"/>
</dbReference>
<dbReference type="OrthoDB" id="5545019at2759"/>
<dbReference type="UniPathway" id="UPA00094"/>
<dbReference type="UniPathway" id="UPA00769"/>
<dbReference type="Proteomes" id="UP000186698">
    <property type="component" value="Chromosome 4L"/>
</dbReference>
<dbReference type="Bgee" id="495218">
    <property type="expression patterns" value="Expressed in internal ear and 19 other cell types or tissues"/>
</dbReference>
<dbReference type="GO" id="GO:0005783">
    <property type="term" value="C:endoplasmic reticulum"/>
    <property type="evidence" value="ECO:0000318"/>
    <property type="project" value="GO_Central"/>
</dbReference>
<dbReference type="GO" id="GO:0005789">
    <property type="term" value="C:endoplasmic reticulum membrane"/>
    <property type="evidence" value="ECO:0007669"/>
    <property type="project" value="UniProtKB-SubCell"/>
</dbReference>
<dbReference type="GO" id="GO:0004303">
    <property type="term" value="F:estradiol 17-beta-dehydrogenase [NAD(P)+] activity"/>
    <property type="evidence" value="ECO:0007669"/>
    <property type="project" value="UniProtKB-EC"/>
</dbReference>
<dbReference type="GO" id="GO:0016491">
    <property type="term" value="F:oxidoreductase activity"/>
    <property type="evidence" value="ECO:0000318"/>
    <property type="project" value="GO_Central"/>
</dbReference>
<dbReference type="GO" id="GO:0141040">
    <property type="term" value="F:very-long-chain 3-oxoacyl-CoA reductase activity"/>
    <property type="evidence" value="ECO:0007669"/>
    <property type="project" value="UniProtKB-EC"/>
</dbReference>
<dbReference type="GO" id="GO:0006703">
    <property type="term" value="P:estrogen biosynthetic process"/>
    <property type="evidence" value="ECO:0007669"/>
    <property type="project" value="UniProtKB-UniPathway"/>
</dbReference>
<dbReference type="GO" id="GO:0006633">
    <property type="term" value="P:fatty acid biosynthetic process"/>
    <property type="evidence" value="ECO:0007669"/>
    <property type="project" value="UniProtKB-UniPathway"/>
</dbReference>
<dbReference type="CDD" id="cd05356">
    <property type="entry name" value="17beta-HSD1_like_SDR_c"/>
    <property type="match status" value="1"/>
</dbReference>
<dbReference type="FunFam" id="3.40.50.720:FF:000137">
    <property type="entry name" value="Hydroxysteroid (17-beta) dehydrogenase 3"/>
    <property type="match status" value="1"/>
</dbReference>
<dbReference type="Gene3D" id="3.40.50.720">
    <property type="entry name" value="NAD(P)-binding Rossmann-like Domain"/>
    <property type="match status" value="1"/>
</dbReference>
<dbReference type="InterPro" id="IPR036291">
    <property type="entry name" value="NAD(P)-bd_dom_sf"/>
</dbReference>
<dbReference type="InterPro" id="IPR020904">
    <property type="entry name" value="Sc_DH/Rdtase_CS"/>
</dbReference>
<dbReference type="InterPro" id="IPR002347">
    <property type="entry name" value="SDR_fam"/>
</dbReference>
<dbReference type="InterPro" id="IPR051019">
    <property type="entry name" value="VLCFA-Steroid_DH"/>
</dbReference>
<dbReference type="PANTHER" id="PTHR43899">
    <property type="entry name" value="RH59310P"/>
    <property type="match status" value="1"/>
</dbReference>
<dbReference type="PANTHER" id="PTHR43899:SF14">
    <property type="entry name" value="VERY-LONG-CHAIN 3-OXOACYL-COA REDUCTASE"/>
    <property type="match status" value="1"/>
</dbReference>
<dbReference type="Pfam" id="PF00106">
    <property type="entry name" value="adh_short"/>
    <property type="match status" value="1"/>
</dbReference>
<dbReference type="PIRSF" id="PIRSF000126">
    <property type="entry name" value="11-beta-HSD1"/>
    <property type="match status" value="1"/>
</dbReference>
<dbReference type="PRINTS" id="PR00081">
    <property type="entry name" value="GDHRDH"/>
</dbReference>
<dbReference type="PRINTS" id="PR00080">
    <property type="entry name" value="SDRFAMILY"/>
</dbReference>
<dbReference type="SUPFAM" id="SSF51735">
    <property type="entry name" value="NAD(P)-binding Rossmann-fold domains"/>
    <property type="match status" value="1"/>
</dbReference>
<dbReference type="PROSITE" id="PS00061">
    <property type="entry name" value="ADH_SHORT"/>
    <property type="match status" value="1"/>
</dbReference>
<feature type="chain" id="PRO_0000248373" description="Very-long-chain 3-oxoacyl-CoA reductase-A">
    <location>
        <begin position="1"/>
        <end position="318"/>
    </location>
</feature>
<feature type="transmembrane region" description="Helical" evidence="3">
    <location>
        <begin position="15"/>
        <end position="35"/>
    </location>
</feature>
<feature type="transmembrane region" description="Helical" evidence="3">
    <location>
        <begin position="187"/>
        <end position="207"/>
    </location>
</feature>
<feature type="transmembrane region" description="Helical" evidence="3">
    <location>
        <begin position="281"/>
        <end position="301"/>
    </location>
</feature>
<feature type="active site" description="Proton acceptor" evidence="4">
    <location>
        <position position="207"/>
    </location>
</feature>
<feature type="binding site" evidence="1">
    <location>
        <begin position="54"/>
        <end position="83"/>
    </location>
    <ligand>
        <name>NADP(+)</name>
        <dbReference type="ChEBI" id="CHEBI:58349"/>
    </ligand>
</feature>
<feature type="binding site" evidence="1">
    <location>
        <position position="194"/>
    </location>
    <ligand>
        <name>substrate</name>
    </ligand>
</feature>
<protein>
    <recommendedName>
        <fullName evidence="5">Very-long-chain 3-oxoacyl-CoA reductase-A</fullName>
        <ecNumber evidence="2">1.1.1.330</ecNumber>
    </recommendedName>
    <alternativeName>
        <fullName evidence="2">17-beta-hydroxysteroid dehydrogenase 12-A</fullName>
        <shortName evidence="2">17-beta-HSD 12-A</shortName>
    </alternativeName>
    <alternativeName>
        <fullName evidence="2">3-ketoacyl-CoA reductase</fullName>
        <shortName evidence="2">KAR</shortName>
    </alternativeName>
    <alternativeName>
        <fullName evidence="2">Estradiol 17-beta-dehydrogenase 12-A</fullName>
        <ecNumber evidence="2">1.1.1.62</ecNumber>
    </alternativeName>
</protein>
<reference key="1">
    <citation type="submission" date="2004-10" db="EMBL/GenBank/DDBJ databases">
        <authorList>
            <consortium name="NIH - Xenopus Gene Collection (XGC) project"/>
        </authorList>
    </citation>
    <scope>NUCLEOTIDE SEQUENCE [LARGE SCALE MRNA]</scope>
    <source>
        <tissue>Lung</tissue>
    </source>
</reference>
<gene>
    <name type="primary">hsd17b12-a</name>
</gene>
<sequence>MAPESLVEVPGCNCFWYLGVLAAAWWGLRAACCLLNGARAWVLGSGAQVGPRIGKWAVVTGATDGIGKAYAEELARRGMSIVLISRSPEKLDEAAKHIKETFKVETKIIAADFGKPTEIYERIEAGLRDLEIGVLVNNVGVSYEYPEYFLEIPDLENTLDKMININIMSVCQMTRLVLPGMLGRGKGVILNISSASGMYPVPLLTVYSATKAFVDFFSRGLHAEYRNKGINVQSVLPFYVATKLAKIRKPTWDKPSPETYVRSAVNTVGLQTQTNGYLPHAIMGWISTSLVPVSVAISMGMKMNKGLRSRFLKRKKQK</sequence>
<organism>
    <name type="scientific">Xenopus laevis</name>
    <name type="common">African clawed frog</name>
    <dbReference type="NCBI Taxonomy" id="8355"/>
    <lineage>
        <taxon>Eukaryota</taxon>
        <taxon>Metazoa</taxon>
        <taxon>Chordata</taxon>
        <taxon>Craniata</taxon>
        <taxon>Vertebrata</taxon>
        <taxon>Euteleostomi</taxon>
        <taxon>Amphibia</taxon>
        <taxon>Batrachia</taxon>
        <taxon>Anura</taxon>
        <taxon>Pipoidea</taxon>
        <taxon>Pipidae</taxon>
        <taxon>Xenopodinae</taxon>
        <taxon>Xenopus</taxon>
        <taxon>Xenopus</taxon>
    </lineage>
</organism>
<evidence type="ECO:0000250" key="1"/>
<evidence type="ECO:0000250" key="2">
    <source>
        <dbReference type="UniProtKB" id="Q53GQ0"/>
    </source>
</evidence>
<evidence type="ECO:0000255" key="3"/>
<evidence type="ECO:0000255" key="4">
    <source>
        <dbReference type="PROSITE-ProRule" id="PRU10001"/>
    </source>
</evidence>
<evidence type="ECO:0000305" key="5"/>
<comment type="function">
    <text evidence="2">Catalyzes the second of the four reactions of the long-chain fatty acids elongation cycle. This endoplasmic reticulum-bound enzymatic process, allows the addition of two carbons to the chain of long- and very long-chain fatty acids/VLCFAs per cycle. This enzyme has a 3-ketoacyl-CoA reductase activity, reducing 3-ketoacyl-CoA to 3-hydroxyacyl-CoA, within each cycle of fatty acid elongation. Thereby, it may participate in the production of VLCFAs of different chain lengths that are involved in multiple biological processes as precursors of membrane lipids and lipid mediators. May also catalyze the transformation of estrone (E1) into estradiol (E2) and play a role in estrogen formation.</text>
</comment>
<comment type="catalytic activity">
    <reaction evidence="2">
        <text>a very-long-chain (3R)-3-hydroxyacyl-CoA + NADP(+) = a very-long-chain 3-oxoacyl-CoA + NADPH + H(+)</text>
        <dbReference type="Rhea" id="RHEA:48680"/>
        <dbReference type="ChEBI" id="CHEBI:15378"/>
        <dbReference type="ChEBI" id="CHEBI:57783"/>
        <dbReference type="ChEBI" id="CHEBI:58349"/>
        <dbReference type="ChEBI" id="CHEBI:85440"/>
        <dbReference type="ChEBI" id="CHEBI:90725"/>
        <dbReference type="EC" id="1.1.1.330"/>
    </reaction>
</comment>
<comment type="catalytic activity">
    <reaction evidence="2">
        <text>17beta-estradiol + NAD(+) = estrone + NADH + H(+)</text>
        <dbReference type="Rhea" id="RHEA:24612"/>
        <dbReference type="ChEBI" id="CHEBI:15378"/>
        <dbReference type="ChEBI" id="CHEBI:16469"/>
        <dbReference type="ChEBI" id="CHEBI:17263"/>
        <dbReference type="ChEBI" id="CHEBI:57540"/>
        <dbReference type="ChEBI" id="CHEBI:57945"/>
        <dbReference type="EC" id="1.1.1.62"/>
    </reaction>
</comment>
<comment type="catalytic activity">
    <reaction evidence="2">
        <text>17beta-estradiol + NADP(+) = estrone + NADPH + H(+)</text>
        <dbReference type="Rhea" id="RHEA:24616"/>
        <dbReference type="ChEBI" id="CHEBI:15378"/>
        <dbReference type="ChEBI" id="CHEBI:16469"/>
        <dbReference type="ChEBI" id="CHEBI:17263"/>
        <dbReference type="ChEBI" id="CHEBI:57783"/>
        <dbReference type="ChEBI" id="CHEBI:58349"/>
        <dbReference type="EC" id="1.1.1.62"/>
    </reaction>
</comment>
<comment type="pathway">
    <text evidence="2">Lipid metabolism; fatty acid biosynthesis.</text>
</comment>
<comment type="pathway">
    <text evidence="2">Steroid biosynthesis; estrogen biosynthesis.</text>
</comment>
<comment type="subcellular location">
    <subcellularLocation>
        <location evidence="2">Endoplasmic reticulum membrane</location>
        <topology evidence="2">Multi-pass membrane protein</topology>
    </subcellularLocation>
</comment>
<comment type="similarity">
    <text evidence="5">Belongs to the short-chain dehydrogenases/reductases (SDR) family. 17-beta-HSD 3 subfamily.</text>
</comment>
<accession>Q5XG41</accession>
<name>DH12A_XENLA</name>